<protein>
    <recommendedName>
        <fullName evidence="1">Bifunctional protein FolD</fullName>
    </recommendedName>
    <domain>
        <recommendedName>
            <fullName evidence="1">Methylenetetrahydrofolate dehydrogenase</fullName>
            <ecNumber evidence="1">1.5.1.5</ecNumber>
        </recommendedName>
    </domain>
    <domain>
        <recommendedName>
            <fullName evidence="1">Methenyltetrahydrofolate cyclohydrolase</fullName>
            <ecNumber evidence="1">3.5.4.9</ecNumber>
        </recommendedName>
    </domain>
</protein>
<accession>Q3K9W7</accession>
<keyword id="KW-0028">Amino-acid biosynthesis</keyword>
<keyword id="KW-0368">Histidine biosynthesis</keyword>
<keyword id="KW-0378">Hydrolase</keyword>
<keyword id="KW-0486">Methionine biosynthesis</keyword>
<keyword id="KW-0511">Multifunctional enzyme</keyword>
<keyword id="KW-0521">NADP</keyword>
<keyword id="KW-0554">One-carbon metabolism</keyword>
<keyword id="KW-0560">Oxidoreductase</keyword>
<keyword id="KW-0658">Purine biosynthesis</keyword>
<proteinExistence type="inferred from homology"/>
<comment type="function">
    <text evidence="1">Catalyzes the oxidation of 5,10-methylenetetrahydrofolate to 5,10-methenyltetrahydrofolate and then the hydrolysis of 5,10-methenyltetrahydrofolate to 10-formyltetrahydrofolate.</text>
</comment>
<comment type="catalytic activity">
    <reaction evidence="1">
        <text>(6R)-5,10-methylene-5,6,7,8-tetrahydrofolate + NADP(+) = (6R)-5,10-methenyltetrahydrofolate + NADPH</text>
        <dbReference type="Rhea" id="RHEA:22812"/>
        <dbReference type="ChEBI" id="CHEBI:15636"/>
        <dbReference type="ChEBI" id="CHEBI:57455"/>
        <dbReference type="ChEBI" id="CHEBI:57783"/>
        <dbReference type="ChEBI" id="CHEBI:58349"/>
        <dbReference type="EC" id="1.5.1.5"/>
    </reaction>
</comment>
<comment type="catalytic activity">
    <reaction evidence="1">
        <text>(6R)-5,10-methenyltetrahydrofolate + H2O = (6R)-10-formyltetrahydrofolate + H(+)</text>
        <dbReference type="Rhea" id="RHEA:23700"/>
        <dbReference type="ChEBI" id="CHEBI:15377"/>
        <dbReference type="ChEBI" id="CHEBI:15378"/>
        <dbReference type="ChEBI" id="CHEBI:57455"/>
        <dbReference type="ChEBI" id="CHEBI:195366"/>
        <dbReference type="EC" id="3.5.4.9"/>
    </reaction>
</comment>
<comment type="pathway">
    <text evidence="1">One-carbon metabolism; tetrahydrofolate interconversion.</text>
</comment>
<comment type="subunit">
    <text evidence="1">Homodimer.</text>
</comment>
<comment type="similarity">
    <text evidence="1">Belongs to the tetrahydrofolate dehydrogenase/cyclohydrolase family.</text>
</comment>
<name>FOLD_PSEPF</name>
<sequence length="284" mass="30507">MTAQLIDGKSIAASLRQQIAQRVAERRQQGLRTPGLAVILVGSDPASQVYVSHKRKDCEEVGFLSQAYDLPSETTQEALTDLIDRLNDDPAIDGVLLQLPLPEHLDASKLLERIRPDKDVDGFHPYNVGRLAQRIPLLRPCTPKGIMTLLESTGADLYGMDAVVVGASNIVGRPMAMELLLAGCTVTVTHRFTKDLAGHVGRADLVVVAAGKPGLVKGEWIKEGAIVIDVGINRQEDGKLVGDVVYETALPRAGWITPVPGGVGPMTRACLLENTLYAAETLHA</sequence>
<evidence type="ECO:0000255" key="1">
    <source>
        <dbReference type="HAMAP-Rule" id="MF_01576"/>
    </source>
</evidence>
<dbReference type="EC" id="1.5.1.5" evidence="1"/>
<dbReference type="EC" id="3.5.4.9" evidence="1"/>
<dbReference type="EMBL" id="CP000094">
    <property type="protein sequence ID" value="ABA75437.1"/>
    <property type="molecule type" value="Genomic_DNA"/>
</dbReference>
<dbReference type="RefSeq" id="WP_011335038.1">
    <property type="nucleotide sequence ID" value="NC_007492.2"/>
</dbReference>
<dbReference type="SMR" id="Q3K9W7"/>
<dbReference type="KEGG" id="pfo:Pfl01_3699"/>
<dbReference type="eggNOG" id="COG0190">
    <property type="taxonomic scope" value="Bacteria"/>
</dbReference>
<dbReference type="HOGENOM" id="CLU_034045_2_1_6"/>
<dbReference type="UniPathway" id="UPA00193"/>
<dbReference type="Proteomes" id="UP000002704">
    <property type="component" value="Chromosome"/>
</dbReference>
<dbReference type="GO" id="GO:0005829">
    <property type="term" value="C:cytosol"/>
    <property type="evidence" value="ECO:0007669"/>
    <property type="project" value="TreeGrafter"/>
</dbReference>
<dbReference type="GO" id="GO:0004477">
    <property type="term" value="F:methenyltetrahydrofolate cyclohydrolase activity"/>
    <property type="evidence" value="ECO:0007669"/>
    <property type="project" value="UniProtKB-UniRule"/>
</dbReference>
<dbReference type="GO" id="GO:0004488">
    <property type="term" value="F:methylenetetrahydrofolate dehydrogenase (NADP+) activity"/>
    <property type="evidence" value="ECO:0007669"/>
    <property type="project" value="UniProtKB-UniRule"/>
</dbReference>
<dbReference type="GO" id="GO:0000105">
    <property type="term" value="P:L-histidine biosynthetic process"/>
    <property type="evidence" value="ECO:0007669"/>
    <property type="project" value="UniProtKB-KW"/>
</dbReference>
<dbReference type="GO" id="GO:0009086">
    <property type="term" value="P:methionine biosynthetic process"/>
    <property type="evidence" value="ECO:0007669"/>
    <property type="project" value="UniProtKB-KW"/>
</dbReference>
<dbReference type="GO" id="GO:0006164">
    <property type="term" value="P:purine nucleotide biosynthetic process"/>
    <property type="evidence" value="ECO:0007669"/>
    <property type="project" value="UniProtKB-KW"/>
</dbReference>
<dbReference type="GO" id="GO:0035999">
    <property type="term" value="P:tetrahydrofolate interconversion"/>
    <property type="evidence" value="ECO:0007669"/>
    <property type="project" value="UniProtKB-UniRule"/>
</dbReference>
<dbReference type="CDD" id="cd01080">
    <property type="entry name" value="NAD_bind_m-THF_DH_Cyclohyd"/>
    <property type="match status" value="1"/>
</dbReference>
<dbReference type="FunFam" id="3.40.50.10860:FF:000001">
    <property type="entry name" value="Bifunctional protein FolD"/>
    <property type="match status" value="1"/>
</dbReference>
<dbReference type="FunFam" id="3.40.50.720:FF:000006">
    <property type="entry name" value="Bifunctional protein FolD"/>
    <property type="match status" value="1"/>
</dbReference>
<dbReference type="Gene3D" id="3.40.50.10860">
    <property type="entry name" value="Leucine Dehydrogenase, chain A, domain 1"/>
    <property type="match status" value="1"/>
</dbReference>
<dbReference type="Gene3D" id="3.40.50.720">
    <property type="entry name" value="NAD(P)-binding Rossmann-like Domain"/>
    <property type="match status" value="1"/>
</dbReference>
<dbReference type="HAMAP" id="MF_01576">
    <property type="entry name" value="THF_DHG_CYH"/>
    <property type="match status" value="1"/>
</dbReference>
<dbReference type="InterPro" id="IPR046346">
    <property type="entry name" value="Aminoacid_DH-like_N_sf"/>
</dbReference>
<dbReference type="InterPro" id="IPR036291">
    <property type="entry name" value="NAD(P)-bd_dom_sf"/>
</dbReference>
<dbReference type="InterPro" id="IPR000672">
    <property type="entry name" value="THF_DH/CycHdrlase"/>
</dbReference>
<dbReference type="InterPro" id="IPR020630">
    <property type="entry name" value="THF_DH/CycHdrlase_cat_dom"/>
</dbReference>
<dbReference type="InterPro" id="IPR020631">
    <property type="entry name" value="THF_DH/CycHdrlase_NAD-bd_dom"/>
</dbReference>
<dbReference type="NCBIfam" id="NF008058">
    <property type="entry name" value="PRK10792.1"/>
    <property type="match status" value="1"/>
</dbReference>
<dbReference type="NCBIfam" id="NF010783">
    <property type="entry name" value="PRK14186.1"/>
    <property type="match status" value="1"/>
</dbReference>
<dbReference type="PANTHER" id="PTHR48099:SF5">
    <property type="entry name" value="C-1-TETRAHYDROFOLATE SYNTHASE, CYTOPLASMIC"/>
    <property type="match status" value="1"/>
</dbReference>
<dbReference type="PANTHER" id="PTHR48099">
    <property type="entry name" value="C-1-TETRAHYDROFOLATE SYNTHASE, CYTOPLASMIC-RELATED"/>
    <property type="match status" value="1"/>
</dbReference>
<dbReference type="Pfam" id="PF00763">
    <property type="entry name" value="THF_DHG_CYH"/>
    <property type="match status" value="1"/>
</dbReference>
<dbReference type="Pfam" id="PF02882">
    <property type="entry name" value="THF_DHG_CYH_C"/>
    <property type="match status" value="1"/>
</dbReference>
<dbReference type="PRINTS" id="PR00085">
    <property type="entry name" value="THFDHDRGNASE"/>
</dbReference>
<dbReference type="SUPFAM" id="SSF53223">
    <property type="entry name" value="Aminoacid dehydrogenase-like, N-terminal domain"/>
    <property type="match status" value="1"/>
</dbReference>
<dbReference type="SUPFAM" id="SSF51735">
    <property type="entry name" value="NAD(P)-binding Rossmann-fold domains"/>
    <property type="match status" value="1"/>
</dbReference>
<feature type="chain" id="PRO_0000268445" description="Bifunctional protein FolD">
    <location>
        <begin position="1"/>
        <end position="284"/>
    </location>
</feature>
<feature type="binding site" evidence="1">
    <location>
        <begin position="166"/>
        <end position="168"/>
    </location>
    <ligand>
        <name>NADP(+)</name>
        <dbReference type="ChEBI" id="CHEBI:58349"/>
    </ligand>
</feature>
<feature type="binding site" evidence="1">
    <location>
        <position position="232"/>
    </location>
    <ligand>
        <name>NADP(+)</name>
        <dbReference type="ChEBI" id="CHEBI:58349"/>
    </ligand>
</feature>
<gene>
    <name evidence="1" type="primary">folD</name>
    <name type="ordered locus">Pfl01_3699</name>
</gene>
<reference key="1">
    <citation type="journal article" date="2009" name="Genome Biol.">
        <title>Genomic and genetic analyses of diversity and plant interactions of Pseudomonas fluorescens.</title>
        <authorList>
            <person name="Silby M.W."/>
            <person name="Cerdeno-Tarraga A.M."/>
            <person name="Vernikos G.S."/>
            <person name="Giddens S.R."/>
            <person name="Jackson R.W."/>
            <person name="Preston G.M."/>
            <person name="Zhang X.-X."/>
            <person name="Moon C.D."/>
            <person name="Gehrig S.M."/>
            <person name="Godfrey S.A.C."/>
            <person name="Knight C.G."/>
            <person name="Malone J.G."/>
            <person name="Robinson Z."/>
            <person name="Spiers A.J."/>
            <person name="Harris S."/>
            <person name="Challis G.L."/>
            <person name="Yaxley A.M."/>
            <person name="Harris D."/>
            <person name="Seeger K."/>
            <person name="Murphy L."/>
            <person name="Rutter S."/>
            <person name="Squares R."/>
            <person name="Quail M.A."/>
            <person name="Saunders E."/>
            <person name="Mavromatis K."/>
            <person name="Brettin T.S."/>
            <person name="Bentley S.D."/>
            <person name="Hothersall J."/>
            <person name="Stephens E."/>
            <person name="Thomas C.M."/>
            <person name="Parkhill J."/>
            <person name="Levy S.B."/>
            <person name="Rainey P.B."/>
            <person name="Thomson N.R."/>
        </authorList>
    </citation>
    <scope>NUCLEOTIDE SEQUENCE [LARGE SCALE GENOMIC DNA]</scope>
    <source>
        <strain>Pf0-1</strain>
    </source>
</reference>
<organism>
    <name type="scientific">Pseudomonas fluorescens (strain Pf0-1)</name>
    <dbReference type="NCBI Taxonomy" id="205922"/>
    <lineage>
        <taxon>Bacteria</taxon>
        <taxon>Pseudomonadati</taxon>
        <taxon>Pseudomonadota</taxon>
        <taxon>Gammaproteobacteria</taxon>
        <taxon>Pseudomonadales</taxon>
        <taxon>Pseudomonadaceae</taxon>
        <taxon>Pseudomonas</taxon>
    </lineage>
</organism>